<evidence type="ECO:0000250" key="1">
    <source>
        <dbReference type="UniProtKB" id="A0A218N034"/>
    </source>
</evidence>
<evidence type="ECO:0000250" key="2">
    <source>
        <dbReference type="UniProtKB" id="O74420"/>
    </source>
</evidence>
<evidence type="ECO:0000255" key="3"/>
<evidence type="ECO:0000256" key="4">
    <source>
        <dbReference type="SAM" id="MobiDB-lite"/>
    </source>
</evidence>
<evidence type="ECO:0000269" key="5">
    <source>
    </source>
</evidence>
<evidence type="ECO:0000303" key="6">
    <source>
    </source>
</evidence>
<evidence type="ECO:0000305" key="7"/>
<evidence type="ECO:0000312" key="8">
    <source>
        <dbReference type="EMBL" id="ARQ19057.1"/>
    </source>
</evidence>
<name>WTF27_SCHPM</name>
<keyword id="KW-0024">Alternative initiation</keyword>
<keyword id="KW-0963">Cytoplasm</keyword>
<keyword id="KW-0256">Endoplasmic reticulum</keyword>
<keyword id="KW-0472">Membrane</keyword>
<keyword id="KW-0800">Toxin</keyword>
<keyword id="KW-0812">Transmembrane</keyword>
<keyword id="KW-1133">Transmembrane helix</keyword>
<keyword id="KW-0926">Vacuole</keyword>
<proteinExistence type="inferred from homology"/>
<protein>
    <recommendedName>
        <fullName evidence="6">Meiotic driver cw27</fullName>
    </recommendedName>
</protein>
<dbReference type="EMBL" id="KY926742">
    <property type="protein sequence ID" value="ARQ19057.1"/>
    <property type="molecule type" value="Genomic_DNA"/>
</dbReference>
<dbReference type="VEuPathDB" id="FungiDB:SPCC1620.02"/>
<dbReference type="GO" id="GO:0072324">
    <property type="term" value="C:ascus epiplasm"/>
    <property type="evidence" value="ECO:0007669"/>
    <property type="project" value="UniProtKB-SubCell"/>
</dbReference>
<dbReference type="GO" id="GO:0005783">
    <property type="term" value="C:endoplasmic reticulum"/>
    <property type="evidence" value="ECO:0007669"/>
    <property type="project" value="UniProtKB-SubCell"/>
</dbReference>
<dbReference type="GO" id="GO:0016020">
    <property type="term" value="C:membrane"/>
    <property type="evidence" value="ECO:0007669"/>
    <property type="project" value="UniProtKB-SubCell"/>
</dbReference>
<dbReference type="GO" id="GO:0005773">
    <property type="term" value="C:vacuole"/>
    <property type="evidence" value="ECO:0007669"/>
    <property type="project" value="UniProtKB-SubCell"/>
</dbReference>
<dbReference type="GO" id="GO:0110134">
    <property type="term" value="P:meiotic drive"/>
    <property type="evidence" value="ECO:0000315"/>
    <property type="project" value="UniProtKB"/>
</dbReference>
<dbReference type="InterPro" id="IPR004982">
    <property type="entry name" value="WTF"/>
</dbReference>
<dbReference type="Pfam" id="PF03303">
    <property type="entry name" value="WTF"/>
    <property type="match status" value="2"/>
</dbReference>
<reference evidence="8" key="1">
    <citation type="journal article" date="2017" name="Elife">
        <title>A large gene family in fission yeast encodes spore killers that subvert Mendel's law.</title>
        <authorList>
            <person name="Hu W."/>
            <person name="Jiang Z.D."/>
            <person name="Suo F."/>
            <person name="Zheng J.X."/>
            <person name="He W.Z."/>
            <person name="Du L.L."/>
        </authorList>
    </citation>
    <scope>NUCLEOTIDE SEQUENCE [GENOMIC DNA]</scope>
    <scope>FUNCTION</scope>
    <scope>ALTERNATIVE INITIATION (ISOFORMS 1 AND 2)</scope>
    <scope>DISRUPTION PHENOTYPE</scope>
    <source>
        <strain evidence="8">CBS5557</strain>
    </source>
</reference>
<comment type="function">
    <text evidence="5">Promotes unequal transmission of alleles from the parental zygote to progeny spores by acting as poison/antidote system where the poison and antidote proteins are produced from the same locus; the poison component is trans-acting and targets all spores within an ascus whereas the antidote component is spore-specific, leading to poisoning of all progeny that do not inherit the allele.</text>
</comment>
<comment type="function">
    <molecule>Isoform 1</molecule>
    <text evidence="1">Localizes isoform 2 to the vacuole thereby facilitating its degradation.</text>
</comment>
<comment type="function">
    <molecule>Isoform 2</molecule>
    <text evidence="1">Forms toxic aggregates that disrupt spore maturation.</text>
</comment>
<comment type="subunit">
    <text evidence="1 2">Homomer (By similarity). Forms protein aggregates (By similarity). The two isoforms can interact with each other and with themselves (By similarity). High sequence similarity is required for their interaction (By similarity).</text>
</comment>
<comment type="subcellular location">
    <molecule>Isoform 1</molecule>
    <subcellularLocation>
        <location evidence="1">Spore membrane</location>
        <topology evidence="3">Multi-pass membrane protein</topology>
    </subcellularLocation>
    <subcellularLocation>
        <location evidence="1">Vacuole</location>
    </subcellularLocation>
    <subcellularLocation>
        <location evidence="3">Membrane</location>
        <topology evidence="3">Multi-pass membrane protein</topology>
    </subcellularLocation>
    <text evidence="1">Contained within spores expressing the isoform and localizes isoform 2 to the vacuole.</text>
</comment>
<comment type="subcellular location">
    <molecule>Isoform 2</molecule>
    <subcellularLocation>
        <location evidence="1">Ascus epiplasm</location>
    </subcellularLocation>
    <subcellularLocation>
        <location evidence="1">Cytoplasm</location>
    </subcellularLocation>
    <subcellularLocation>
        <location evidence="1">Spore membrane</location>
        <topology evidence="3">Multi-pass membrane protein</topology>
    </subcellularLocation>
    <subcellularLocation>
        <location evidence="1">Vacuole</location>
    </subcellularLocation>
    <subcellularLocation>
        <location evidence="1">Endoplasmic reticulum</location>
    </subcellularLocation>
    <subcellularLocation>
        <location evidence="3">Membrane</location>
        <topology evidence="3">Multi-pass membrane protein</topology>
    </subcellularLocation>
    <text evidence="1">Localizes in trans to all spores within an ascus. Localization to the spore vacuole is dependent on isoform 1.</text>
</comment>
<comment type="alternative products">
    <event type="alternative initiation"/>
    <isoform>
        <id>A0A1X9Q9H1-1</id>
        <name>1</name>
        <name evidence="6">Antidote</name>
        <name evidence="7">Suppressor</name>
        <sequence type="displayed"/>
    </isoform>
    <isoform>
        <id>A0A1X9Q9H1-2</id>
        <name>2</name>
        <name evidence="6">Poison</name>
        <sequence type="described" ref="VSP_060936"/>
    </isoform>
</comment>
<comment type="disruption phenotype">
    <text evidence="5">Abnormal spore maturation in presence of cw27-encoded poison (PubMed:28631610). Sensitises cells to cw27-encoded poison; simultaneous disruption of cw9 enhances sensitivity (PubMed:28631610).</text>
</comment>
<comment type="similarity">
    <text evidence="7">Belongs to the WTF family.</text>
</comment>
<accession>A0A1X9Q9H1</accession>
<organism evidence="8">
    <name type="scientific">Schizosaccharomyces pombe</name>
    <name type="common">Fission yeast</name>
    <dbReference type="NCBI Taxonomy" id="4896"/>
    <lineage>
        <taxon>Eukaryota</taxon>
        <taxon>Fungi</taxon>
        <taxon>Dikarya</taxon>
        <taxon>Ascomycota</taxon>
        <taxon>Taphrinomycotina</taxon>
        <taxon>Schizosaccharomycetes</taxon>
        <taxon>Schizosaccharomycetales</taxon>
        <taxon>Schizosaccharomycetaceae</taxon>
        <taxon>Schizosaccharomyces</taxon>
    </lineage>
</organism>
<gene>
    <name evidence="8" type="primary">cw27</name>
</gene>
<sequence>MKNKYYPLRSSMDELSTKNDNEIDLEKGPLPEYNSEDGSTLPPYSENLNLKDPKQMGQSITKLFNWNKSTTPPDYDENRLLITDEGNNPPNTHRENHSSGTTDNSSPFLIKLLISFTSIILFNAPAVCYLKYKDAFFKNYGAAEWTLIGFWCASSLIIFTFSWCFYETWTKAVKVTVIFLAQCIKVTAISLAKCVKVISIGLFNIRREMMIIIWILWLIICCILFGCVKDGRLNLNKALICSTCTISAVLFLIVSSVCIPIWTLWRALSGMLQVLGIHGIIALLVNGLMSLFGKHFGWRGYEIEGFVLFFTGNALFLYEMERPGVLKRMRNTTRNVIGFILGGIANAIGGIANAIGGANDNNDIPLGELEVESEV</sequence>
<feature type="chain" id="PRO_0000452268" description="Meiotic driver cw27">
    <location>
        <begin position="1"/>
        <end position="375"/>
    </location>
</feature>
<feature type="transmembrane region" description="Helical" evidence="3">
    <location>
        <begin position="108"/>
        <end position="128"/>
    </location>
</feature>
<feature type="transmembrane region" description="Helical" evidence="3">
    <location>
        <begin position="145"/>
        <end position="165"/>
    </location>
</feature>
<feature type="transmembrane region" description="Helical" evidence="3">
    <location>
        <begin position="172"/>
        <end position="192"/>
    </location>
</feature>
<feature type="transmembrane region" description="Helical" evidence="3">
    <location>
        <begin position="208"/>
        <end position="228"/>
    </location>
</feature>
<feature type="transmembrane region" description="Helical" evidence="3">
    <location>
        <begin position="245"/>
        <end position="265"/>
    </location>
</feature>
<feature type="transmembrane region" description="Helical" evidence="3">
    <location>
        <begin position="272"/>
        <end position="292"/>
    </location>
</feature>
<feature type="transmembrane region" description="Helical" evidence="3">
    <location>
        <begin position="336"/>
        <end position="356"/>
    </location>
</feature>
<feature type="region of interest" description="Disordered" evidence="4">
    <location>
        <begin position="1"/>
        <end position="42"/>
    </location>
</feature>
<feature type="region of interest" description="Disordered" evidence="4">
    <location>
        <begin position="74"/>
        <end position="103"/>
    </location>
</feature>
<feature type="compositionally biased region" description="Basic and acidic residues" evidence="4">
    <location>
        <begin position="11"/>
        <end position="29"/>
    </location>
</feature>
<feature type="splice variant" id="VSP_060936" description="In isoform 2." evidence="5">
    <location>
        <begin position="1"/>
        <end position="55"/>
    </location>
</feature>